<organism>
    <name type="scientific">Streptococcus pyogenes serotype M49 (strain NZ131)</name>
    <dbReference type="NCBI Taxonomy" id="471876"/>
    <lineage>
        <taxon>Bacteria</taxon>
        <taxon>Bacillati</taxon>
        <taxon>Bacillota</taxon>
        <taxon>Bacilli</taxon>
        <taxon>Lactobacillales</taxon>
        <taxon>Streptococcaceae</taxon>
        <taxon>Streptococcus</taxon>
    </lineage>
</organism>
<sequence>MTDRYILAVESSCDETSVAILKNESTLLSNVIASQVESHKRFGGVVPEVASRHHVEVITTCFEDALQEAGISASDLSAVAVTYGPGLVGALLVGLAAAKAFAWANHLPLIPVNHMAGHLMAAREQKPLVYPLIALLVSGGHTELVYVPEPGDYHIIGETRDDAVGEAYDKVGRVMGLTYPAGREIDQLAHKGQDTYHFPRAMITEDHLEFSFSGLKSAFINLHHNAKQKGDELILEDLCASFQAAVLDILLAKTKKALSRYPAKMLVVAGGVAANQGLRDRLAQEITHIEVVIPKLRLCGDNAGMIALAAAIEYDKQHFANMSLNAKPSLAFDQFPDSFVIN</sequence>
<protein>
    <recommendedName>
        <fullName evidence="1">tRNA N6-adenosine threonylcarbamoyltransferase</fullName>
        <ecNumber evidence="1">2.3.1.234</ecNumber>
    </recommendedName>
    <alternativeName>
        <fullName evidence="1">N6-L-threonylcarbamoyladenine synthase</fullName>
        <shortName evidence="1">t(6)A synthase</shortName>
    </alternativeName>
    <alternativeName>
        <fullName evidence="1">t(6)A37 threonylcarbamoyladenosine biosynthesis protein TsaD</fullName>
    </alternativeName>
    <alternativeName>
        <fullName evidence="1">tRNA threonylcarbamoyladenosine biosynthesis protein TsaD</fullName>
    </alternativeName>
</protein>
<reference key="1">
    <citation type="journal article" date="2008" name="J. Bacteriol.">
        <title>Genome sequence of a nephritogenic and highly transformable M49 strain of Streptococcus pyogenes.</title>
        <authorList>
            <person name="McShan W.M."/>
            <person name="Ferretti J.J."/>
            <person name="Karasawa T."/>
            <person name="Suvorov A.N."/>
            <person name="Lin S."/>
            <person name="Qin B."/>
            <person name="Jia H."/>
            <person name="Kenton S."/>
            <person name="Najar F."/>
            <person name="Wu H."/>
            <person name="Scott J."/>
            <person name="Roe B.A."/>
            <person name="Savic D.J."/>
        </authorList>
    </citation>
    <scope>NUCLEOTIDE SEQUENCE [LARGE SCALE GENOMIC DNA]</scope>
    <source>
        <strain>NZ131</strain>
    </source>
</reference>
<name>TSAD_STRPZ</name>
<accession>B5XIE3</accession>
<gene>
    <name evidence="1" type="primary">tsaD</name>
    <name type="synonym">gcp</name>
    <name type="ordered locus">Spy49_1545c</name>
</gene>
<proteinExistence type="inferred from homology"/>
<feature type="chain" id="PRO_1000146031" description="tRNA N6-adenosine threonylcarbamoyltransferase">
    <location>
        <begin position="1"/>
        <end position="342"/>
    </location>
</feature>
<feature type="binding site" evidence="1">
    <location>
        <position position="114"/>
    </location>
    <ligand>
        <name>Fe cation</name>
        <dbReference type="ChEBI" id="CHEBI:24875"/>
    </ligand>
</feature>
<feature type="binding site" evidence="1">
    <location>
        <position position="118"/>
    </location>
    <ligand>
        <name>Fe cation</name>
        <dbReference type="ChEBI" id="CHEBI:24875"/>
    </ligand>
</feature>
<feature type="binding site" evidence="1">
    <location>
        <begin position="136"/>
        <end position="140"/>
    </location>
    <ligand>
        <name>substrate</name>
    </ligand>
</feature>
<feature type="binding site" evidence="1">
    <location>
        <position position="169"/>
    </location>
    <ligand>
        <name>substrate</name>
    </ligand>
</feature>
<feature type="binding site" evidence="1">
    <location>
        <position position="182"/>
    </location>
    <ligand>
        <name>substrate</name>
    </ligand>
</feature>
<feature type="binding site" evidence="1">
    <location>
        <position position="186"/>
    </location>
    <ligand>
        <name>substrate</name>
    </ligand>
</feature>
<feature type="binding site" evidence="1">
    <location>
        <position position="275"/>
    </location>
    <ligand>
        <name>substrate</name>
    </ligand>
</feature>
<feature type="binding site" evidence="1">
    <location>
        <position position="301"/>
    </location>
    <ligand>
        <name>Fe cation</name>
        <dbReference type="ChEBI" id="CHEBI:24875"/>
    </ligand>
</feature>
<dbReference type="EC" id="2.3.1.234" evidence="1"/>
<dbReference type="EMBL" id="CP000829">
    <property type="protein sequence ID" value="ACI61805.1"/>
    <property type="molecule type" value="Genomic_DNA"/>
</dbReference>
<dbReference type="SMR" id="B5XIE3"/>
<dbReference type="KEGG" id="soz:Spy49_1545c"/>
<dbReference type="HOGENOM" id="CLU_023208_0_2_9"/>
<dbReference type="Proteomes" id="UP000001039">
    <property type="component" value="Chromosome"/>
</dbReference>
<dbReference type="GO" id="GO:0005737">
    <property type="term" value="C:cytoplasm"/>
    <property type="evidence" value="ECO:0007669"/>
    <property type="project" value="UniProtKB-SubCell"/>
</dbReference>
<dbReference type="GO" id="GO:0005506">
    <property type="term" value="F:iron ion binding"/>
    <property type="evidence" value="ECO:0007669"/>
    <property type="project" value="UniProtKB-UniRule"/>
</dbReference>
<dbReference type="GO" id="GO:0061711">
    <property type="term" value="F:N(6)-L-threonylcarbamoyladenine synthase activity"/>
    <property type="evidence" value="ECO:0007669"/>
    <property type="project" value="UniProtKB-EC"/>
</dbReference>
<dbReference type="GO" id="GO:0002949">
    <property type="term" value="P:tRNA threonylcarbamoyladenosine modification"/>
    <property type="evidence" value="ECO:0007669"/>
    <property type="project" value="UniProtKB-UniRule"/>
</dbReference>
<dbReference type="CDD" id="cd24133">
    <property type="entry name" value="ASKHA_NBD_TsaD_bac"/>
    <property type="match status" value="1"/>
</dbReference>
<dbReference type="FunFam" id="3.30.420.40:FF:000012">
    <property type="entry name" value="tRNA N6-adenosine threonylcarbamoyltransferase"/>
    <property type="match status" value="1"/>
</dbReference>
<dbReference type="FunFam" id="3.30.420.40:FF:000040">
    <property type="entry name" value="tRNA N6-adenosine threonylcarbamoyltransferase"/>
    <property type="match status" value="1"/>
</dbReference>
<dbReference type="Gene3D" id="3.30.420.40">
    <property type="match status" value="2"/>
</dbReference>
<dbReference type="HAMAP" id="MF_01445">
    <property type="entry name" value="TsaD"/>
    <property type="match status" value="1"/>
</dbReference>
<dbReference type="InterPro" id="IPR043129">
    <property type="entry name" value="ATPase_NBD"/>
</dbReference>
<dbReference type="InterPro" id="IPR000905">
    <property type="entry name" value="Gcp-like_dom"/>
</dbReference>
<dbReference type="InterPro" id="IPR017861">
    <property type="entry name" value="KAE1/TsaD"/>
</dbReference>
<dbReference type="InterPro" id="IPR022450">
    <property type="entry name" value="TsaD"/>
</dbReference>
<dbReference type="NCBIfam" id="TIGR00329">
    <property type="entry name" value="gcp_kae1"/>
    <property type="match status" value="1"/>
</dbReference>
<dbReference type="NCBIfam" id="TIGR03723">
    <property type="entry name" value="T6A_TsaD_YgjD"/>
    <property type="match status" value="1"/>
</dbReference>
<dbReference type="PANTHER" id="PTHR11735">
    <property type="entry name" value="TRNA N6-ADENOSINE THREONYLCARBAMOYLTRANSFERASE"/>
    <property type="match status" value="1"/>
</dbReference>
<dbReference type="PANTHER" id="PTHR11735:SF6">
    <property type="entry name" value="TRNA N6-ADENOSINE THREONYLCARBAMOYLTRANSFERASE, MITOCHONDRIAL"/>
    <property type="match status" value="1"/>
</dbReference>
<dbReference type="Pfam" id="PF00814">
    <property type="entry name" value="TsaD"/>
    <property type="match status" value="1"/>
</dbReference>
<dbReference type="PRINTS" id="PR00789">
    <property type="entry name" value="OSIALOPTASE"/>
</dbReference>
<dbReference type="SUPFAM" id="SSF53067">
    <property type="entry name" value="Actin-like ATPase domain"/>
    <property type="match status" value="1"/>
</dbReference>
<evidence type="ECO:0000255" key="1">
    <source>
        <dbReference type="HAMAP-Rule" id="MF_01445"/>
    </source>
</evidence>
<keyword id="KW-0012">Acyltransferase</keyword>
<keyword id="KW-0963">Cytoplasm</keyword>
<keyword id="KW-0408">Iron</keyword>
<keyword id="KW-0479">Metal-binding</keyword>
<keyword id="KW-0808">Transferase</keyword>
<keyword id="KW-0819">tRNA processing</keyword>
<comment type="function">
    <text evidence="1">Required for the formation of a threonylcarbamoyl group on adenosine at position 37 (t(6)A37) in tRNAs that read codons beginning with adenine. Is involved in the transfer of the threonylcarbamoyl moiety of threonylcarbamoyl-AMP (TC-AMP) to the N6 group of A37, together with TsaE and TsaB. TsaD likely plays a direct catalytic role in this reaction.</text>
</comment>
<comment type="catalytic activity">
    <reaction evidence="1">
        <text>L-threonylcarbamoyladenylate + adenosine(37) in tRNA = N(6)-L-threonylcarbamoyladenosine(37) in tRNA + AMP + H(+)</text>
        <dbReference type="Rhea" id="RHEA:37059"/>
        <dbReference type="Rhea" id="RHEA-COMP:10162"/>
        <dbReference type="Rhea" id="RHEA-COMP:10163"/>
        <dbReference type="ChEBI" id="CHEBI:15378"/>
        <dbReference type="ChEBI" id="CHEBI:73682"/>
        <dbReference type="ChEBI" id="CHEBI:74411"/>
        <dbReference type="ChEBI" id="CHEBI:74418"/>
        <dbReference type="ChEBI" id="CHEBI:456215"/>
        <dbReference type="EC" id="2.3.1.234"/>
    </reaction>
</comment>
<comment type="cofactor">
    <cofactor evidence="1">
        <name>Fe(2+)</name>
        <dbReference type="ChEBI" id="CHEBI:29033"/>
    </cofactor>
    <text evidence="1">Binds 1 Fe(2+) ion per subunit.</text>
</comment>
<comment type="subcellular location">
    <subcellularLocation>
        <location evidence="1">Cytoplasm</location>
    </subcellularLocation>
</comment>
<comment type="similarity">
    <text evidence="1">Belongs to the KAE1 / TsaD family.</text>
</comment>